<name>RNT_VIBCH</name>
<keyword id="KW-0269">Exonuclease</keyword>
<keyword id="KW-0378">Hydrolase</keyword>
<keyword id="KW-0460">Magnesium</keyword>
<keyword id="KW-0479">Metal-binding</keyword>
<keyword id="KW-0540">Nuclease</keyword>
<keyword id="KW-1185">Reference proteome</keyword>
<keyword id="KW-0819">tRNA processing</keyword>
<reference key="1">
    <citation type="journal article" date="2000" name="Nature">
        <title>DNA sequence of both chromosomes of the cholera pathogen Vibrio cholerae.</title>
        <authorList>
            <person name="Heidelberg J.F."/>
            <person name="Eisen J.A."/>
            <person name="Nelson W.C."/>
            <person name="Clayton R.A."/>
            <person name="Gwinn M.L."/>
            <person name="Dodson R.J."/>
            <person name="Haft D.H."/>
            <person name="Hickey E.K."/>
            <person name="Peterson J.D."/>
            <person name="Umayam L.A."/>
            <person name="Gill S.R."/>
            <person name="Nelson K.E."/>
            <person name="Read T.D."/>
            <person name="Tettelin H."/>
            <person name="Richardson D.L."/>
            <person name="Ermolaeva M.D."/>
            <person name="Vamathevan J.J."/>
            <person name="Bass S."/>
            <person name="Qin H."/>
            <person name="Dragoi I."/>
            <person name="Sellers P."/>
            <person name="McDonald L.A."/>
            <person name="Utterback T.R."/>
            <person name="Fleischmann R.D."/>
            <person name="Nierman W.C."/>
            <person name="White O."/>
            <person name="Salzberg S.L."/>
            <person name="Smith H.O."/>
            <person name="Colwell R.R."/>
            <person name="Mekalanos J.J."/>
            <person name="Venter J.C."/>
            <person name="Fraser C.M."/>
        </authorList>
    </citation>
    <scope>NUCLEOTIDE SEQUENCE [LARGE SCALE GENOMIC DNA]</scope>
    <source>
        <strain>ATCC 39315 / El Tor Inaba N16961</strain>
    </source>
</reference>
<feature type="chain" id="PRO_0000208976" description="Ribonuclease T">
    <location>
        <begin position="1"/>
        <end position="224"/>
    </location>
</feature>
<feature type="domain" description="Exonuclease" evidence="1">
    <location>
        <begin position="20"/>
        <end position="195"/>
    </location>
</feature>
<feature type="active site" description="Proton donor/acceptor" evidence="1">
    <location>
        <position position="182"/>
    </location>
</feature>
<feature type="binding site" evidence="1">
    <location>
        <position position="23"/>
    </location>
    <ligand>
        <name>Mg(2+)</name>
        <dbReference type="ChEBI" id="CHEBI:18420"/>
        <label>1</label>
        <note>catalytic</note>
    </ligand>
</feature>
<feature type="binding site" evidence="1">
    <location>
        <position position="23"/>
    </location>
    <ligand>
        <name>Mg(2+)</name>
        <dbReference type="ChEBI" id="CHEBI:18420"/>
        <label>2</label>
        <note>catalytic</note>
    </ligand>
</feature>
<feature type="binding site" evidence="1">
    <location>
        <position position="25"/>
    </location>
    <ligand>
        <name>Mg(2+)</name>
        <dbReference type="ChEBI" id="CHEBI:18420"/>
        <label>2</label>
        <note>catalytic</note>
    </ligand>
</feature>
<feature type="binding site" evidence="1">
    <location>
        <position position="182"/>
    </location>
    <ligand>
        <name>Mg(2+)</name>
        <dbReference type="ChEBI" id="CHEBI:18420"/>
        <label>2</label>
        <note>catalytic</note>
    </ligand>
</feature>
<feature type="binding site" evidence="1">
    <location>
        <position position="187"/>
    </location>
    <ligand>
        <name>Mg(2+)</name>
        <dbReference type="ChEBI" id="CHEBI:18420"/>
        <label>2</label>
        <note>catalytic</note>
    </ligand>
</feature>
<feature type="site" description="Important for substrate binding and specificity" evidence="1">
    <location>
        <position position="29"/>
    </location>
</feature>
<feature type="site" description="Important for substrate binding and specificity" evidence="1">
    <location>
        <position position="77"/>
    </location>
</feature>
<feature type="site" description="Important for substrate binding and specificity" evidence="1">
    <location>
        <position position="125"/>
    </location>
</feature>
<feature type="site" description="Important for substrate binding and specificity" evidence="1">
    <location>
        <position position="147"/>
    </location>
</feature>
<protein>
    <recommendedName>
        <fullName evidence="1">Ribonuclease T</fullName>
        <ecNumber evidence="1">3.1.13.-</ecNumber>
    </recommendedName>
    <alternativeName>
        <fullName evidence="1">Exoribonuclease T</fullName>
        <shortName evidence="1">RNase T</shortName>
    </alternativeName>
</protein>
<sequence length="224" mass="24812">MTDKNDALTLKKRFRGYFPVVIDVETAGFNAQTDALLEICAVTLSMDENGDLHPASTIHFHVEPFEGANLEKAALEFTGIYDPFSPLRGAVSEDHALKEIYKLVRKEQKAADCSRAIIVAHNAHFDHSFVMAASERCKLKRVPFHPFATFDTATLSGLAFGQTVLAKACKTAGMEFDNREAHSALYDTQKTAELFCTIVNQWKALGGWPLVNDDEDNNNDADLD</sequence>
<gene>
    <name evidence="1" type="primary">rnt</name>
    <name type="ordered locus">VC_1006</name>
</gene>
<comment type="function">
    <text evidence="1">Trims short 3' overhangs of a variety of RNA species, leaving a one or two nucleotide 3' overhang. Responsible for the end-turnover of tRNA: specifically removes the terminal AMP residue from uncharged tRNA (tRNA-C-C-A). Also appears to be involved in tRNA biosynthesis.</text>
</comment>
<comment type="cofactor">
    <cofactor evidence="1">
        <name>Mg(2+)</name>
        <dbReference type="ChEBI" id="CHEBI:18420"/>
    </cofactor>
    <text evidence="1">Binds two Mg(2+) per subunit. The active form of the enzyme binds two Mg(2+) ions in its active site. The first Mg(2+) forms only one salt bridge with the protein.</text>
</comment>
<comment type="subunit">
    <text evidence="1">Homodimer.</text>
</comment>
<comment type="similarity">
    <text evidence="1">Belongs to the RNase T family.</text>
</comment>
<comment type="sequence caution" evidence="2">
    <conflict type="erroneous initiation">
        <sequence resource="EMBL-CDS" id="AAF94167"/>
    </conflict>
</comment>
<proteinExistence type="inferred from homology"/>
<accession>Q9KT97</accession>
<evidence type="ECO:0000255" key="1">
    <source>
        <dbReference type="HAMAP-Rule" id="MF_00157"/>
    </source>
</evidence>
<evidence type="ECO:0000305" key="2"/>
<dbReference type="EC" id="3.1.13.-" evidence="1"/>
<dbReference type="EMBL" id="AE003852">
    <property type="protein sequence ID" value="AAF94167.1"/>
    <property type="status" value="ALT_INIT"/>
    <property type="molecule type" value="Genomic_DNA"/>
</dbReference>
<dbReference type="PIR" id="H82253">
    <property type="entry name" value="H82253"/>
</dbReference>
<dbReference type="RefSeq" id="NP_230652.1">
    <property type="nucleotide sequence ID" value="NC_002505.1"/>
</dbReference>
<dbReference type="RefSeq" id="WP_000130223.1">
    <property type="nucleotide sequence ID" value="NZ_LT906614.1"/>
</dbReference>
<dbReference type="SMR" id="Q9KT97"/>
<dbReference type="STRING" id="243277.VC_1006"/>
<dbReference type="DNASU" id="2614259"/>
<dbReference type="EnsemblBacteria" id="AAF94167">
    <property type="protein sequence ID" value="AAF94167"/>
    <property type="gene ID" value="VC_1006"/>
</dbReference>
<dbReference type="GeneID" id="89514889"/>
<dbReference type="KEGG" id="vch:VC_1006"/>
<dbReference type="PATRIC" id="fig|243277.26.peg.960"/>
<dbReference type="eggNOG" id="COG0847">
    <property type="taxonomic scope" value="Bacteria"/>
</dbReference>
<dbReference type="HOGENOM" id="CLU_082724_0_0_6"/>
<dbReference type="Proteomes" id="UP000000584">
    <property type="component" value="Chromosome 1"/>
</dbReference>
<dbReference type="GO" id="GO:0005829">
    <property type="term" value="C:cytosol"/>
    <property type="evidence" value="ECO:0000318"/>
    <property type="project" value="GO_Central"/>
</dbReference>
<dbReference type="GO" id="GO:0008408">
    <property type="term" value="F:3'-5' exonuclease activity"/>
    <property type="evidence" value="ECO:0000318"/>
    <property type="project" value="GO_Central"/>
</dbReference>
<dbReference type="GO" id="GO:0000287">
    <property type="term" value="F:magnesium ion binding"/>
    <property type="evidence" value="ECO:0007669"/>
    <property type="project" value="UniProtKB-UniRule"/>
</dbReference>
<dbReference type="GO" id="GO:0003676">
    <property type="term" value="F:nucleic acid binding"/>
    <property type="evidence" value="ECO:0007669"/>
    <property type="project" value="InterPro"/>
</dbReference>
<dbReference type="GO" id="GO:0016896">
    <property type="term" value="F:RNA exonuclease activity, producing 5'-phosphomonoesters"/>
    <property type="evidence" value="ECO:0007669"/>
    <property type="project" value="UniProtKB-UniRule"/>
</dbReference>
<dbReference type="GO" id="GO:0045004">
    <property type="term" value="P:DNA replication proofreading"/>
    <property type="evidence" value="ECO:0000318"/>
    <property type="project" value="GO_Central"/>
</dbReference>
<dbReference type="GO" id="GO:0008033">
    <property type="term" value="P:tRNA processing"/>
    <property type="evidence" value="ECO:0007669"/>
    <property type="project" value="UniProtKB-KW"/>
</dbReference>
<dbReference type="CDD" id="cd06134">
    <property type="entry name" value="RNaseT"/>
    <property type="match status" value="1"/>
</dbReference>
<dbReference type="FunFam" id="3.30.420.10:FF:000009">
    <property type="entry name" value="Ribonuclease T"/>
    <property type="match status" value="1"/>
</dbReference>
<dbReference type="Gene3D" id="3.30.420.10">
    <property type="entry name" value="Ribonuclease H-like superfamily/Ribonuclease H"/>
    <property type="match status" value="1"/>
</dbReference>
<dbReference type="HAMAP" id="MF_00157">
    <property type="entry name" value="RNase_T"/>
    <property type="match status" value="1"/>
</dbReference>
<dbReference type="InterPro" id="IPR013520">
    <property type="entry name" value="Exonuclease_RNaseT/DNA_pol3"/>
</dbReference>
<dbReference type="InterPro" id="IPR005987">
    <property type="entry name" value="RNase_T"/>
</dbReference>
<dbReference type="InterPro" id="IPR012337">
    <property type="entry name" value="RNaseH-like_sf"/>
</dbReference>
<dbReference type="InterPro" id="IPR036397">
    <property type="entry name" value="RNaseH_sf"/>
</dbReference>
<dbReference type="NCBIfam" id="TIGR01298">
    <property type="entry name" value="RNaseT"/>
    <property type="match status" value="1"/>
</dbReference>
<dbReference type="PANTHER" id="PTHR30231">
    <property type="entry name" value="DNA POLYMERASE III SUBUNIT EPSILON"/>
    <property type="match status" value="1"/>
</dbReference>
<dbReference type="PANTHER" id="PTHR30231:SF2">
    <property type="entry name" value="RIBONUCLEASE T"/>
    <property type="match status" value="1"/>
</dbReference>
<dbReference type="Pfam" id="PF00929">
    <property type="entry name" value="RNase_T"/>
    <property type="match status" value="1"/>
</dbReference>
<dbReference type="SMART" id="SM00479">
    <property type="entry name" value="EXOIII"/>
    <property type="match status" value="1"/>
</dbReference>
<dbReference type="SUPFAM" id="SSF53098">
    <property type="entry name" value="Ribonuclease H-like"/>
    <property type="match status" value="1"/>
</dbReference>
<organism>
    <name type="scientific">Vibrio cholerae serotype O1 (strain ATCC 39315 / El Tor Inaba N16961)</name>
    <dbReference type="NCBI Taxonomy" id="243277"/>
    <lineage>
        <taxon>Bacteria</taxon>
        <taxon>Pseudomonadati</taxon>
        <taxon>Pseudomonadota</taxon>
        <taxon>Gammaproteobacteria</taxon>
        <taxon>Vibrionales</taxon>
        <taxon>Vibrionaceae</taxon>
        <taxon>Vibrio</taxon>
    </lineage>
</organism>